<keyword id="KW-0053">Apoptosis</keyword>
<keyword id="KW-0238">DNA-binding</keyword>
<keyword id="KW-0539">Nucleus</keyword>
<keyword id="KW-1185">Reference proteome</keyword>
<keyword id="KW-0678">Repressor</keyword>
<keyword id="KW-0804">Transcription</keyword>
<keyword id="KW-0805">Transcription regulation</keyword>
<reference key="1">
    <citation type="journal article" date="1996" name="Nature">
        <title>Transcriptional regulator of programmed cell death encoded by Caenorhabditis elegans gene ces-2.</title>
        <authorList>
            <person name="Metzstein M.M."/>
            <person name="Hengartner M.O."/>
            <person name="Tsung N."/>
            <person name="Ellis R."/>
            <person name="Horvitz H.R."/>
        </authorList>
    </citation>
    <scope>NUCLEOTIDE SEQUENCE [GENOMIC DNA]</scope>
    <scope>FUNCTION</scope>
    <scope>MUTAGENESIS OF ALA-129</scope>
    <source>
        <strain>Bristol N2</strain>
    </source>
</reference>
<reference key="2">
    <citation type="journal article" date="1998" name="Science">
        <title>Genome sequence of the nematode C. elegans: a platform for investigating biology.</title>
        <authorList>
            <consortium name="The C. elegans sequencing consortium"/>
        </authorList>
    </citation>
    <scope>NUCLEOTIDE SEQUENCE [LARGE SCALE GENOMIC DNA]</scope>
    <source>
        <strain>Bristol N2</strain>
    </source>
</reference>
<reference key="3">
    <citation type="journal article" date="2002" name="Genes Dev.">
        <title>Multiple regulatory changes contribute to the evolution of the Caenorhabditis lin-48 ovo gene.</title>
        <authorList>
            <person name="Wang X."/>
            <person name="Chamberlin H.M."/>
        </authorList>
    </citation>
    <scope>FUNCTION</scope>
    <scope>DISRUPTION PHENOTYPE</scope>
    <scope>MUTAGENESIS OF ALA-129</scope>
</reference>
<reference key="4">
    <citation type="journal article" date="2006" name="Dev. Biol.">
        <title>The bZip proteins CES-2 and ATF-2 alter the timing of transcription for a cell-specific target gene in C. elegans.</title>
        <authorList>
            <person name="Wang X."/>
            <person name="Jia H."/>
            <person name="Chamberlin H.M."/>
        </authorList>
    </citation>
    <scope>FUNCTION</scope>
    <scope>DEVELOPMENTAL STAGE</scope>
    <scope>INTERACTION WITH ATF-2</scope>
</reference>
<reference evidence="7" key="5">
    <citation type="journal article" date="2009" name="J. Neurochem.">
        <title>Discovery and characterization of a conserved pigment dispersing factor-like neuropeptide pathway in Caenorhabditis elegans.</title>
        <authorList>
            <person name="Janssen T."/>
            <person name="Husson S.J."/>
            <person name="Meelkop E."/>
            <person name="Temmerman L."/>
            <person name="Lindemans M."/>
            <person name="Verstraelen K."/>
            <person name="Rademakers S."/>
            <person name="Mertens I."/>
            <person name="Nitabach M."/>
            <person name="Jansen G."/>
            <person name="Schoofs L."/>
        </authorList>
    </citation>
    <scope>FUNCTION</scope>
</reference>
<sequence>MDFHRALSALFTNQAAVQPLLGSLGFPFNDGTSILTTALAAQSGGKKLDTPLGILPFDSLPTTNLLTPTKKIKLEDELCASPVSSRSSTVSSSHFSSPQRSPSRKMSVPIPEEKKDSAYFERRRKNNDAAKRSRDARRQKEEQIASKAHALERENMQLRGKVSSLEQEAAQLRFLLFSKISPANSEVSCESNDSTETNDSNDSKSDSTIEV</sequence>
<protein>
    <recommendedName>
        <fullName evidence="7">Transcription factor ces-2</fullName>
    </recommendedName>
    <alternativeName>
        <fullName evidence="8">Cell death specification protein 2</fullName>
    </alternativeName>
</protein>
<organism>
    <name type="scientific">Caenorhabditis elegans</name>
    <dbReference type="NCBI Taxonomy" id="6239"/>
    <lineage>
        <taxon>Eukaryota</taxon>
        <taxon>Metazoa</taxon>
        <taxon>Ecdysozoa</taxon>
        <taxon>Nematoda</taxon>
        <taxon>Chromadorea</taxon>
        <taxon>Rhabditida</taxon>
        <taxon>Rhabditina</taxon>
        <taxon>Rhabditomorpha</taxon>
        <taxon>Rhabditoidea</taxon>
        <taxon>Rhabditidae</taxon>
        <taxon>Peloderinae</taxon>
        <taxon>Caenorhabditis</taxon>
    </lineage>
</organism>
<name>CES2_CAEEL</name>
<dbReference type="EMBL" id="U60979">
    <property type="protein sequence ID" value="AAC47277.1"/>
    <property type="molecule type" value="Genomic_DNA"/>
</dbReference>
<dbReference type="EMBL" id="Z82096">
    <property type="protein sequence ID" value="CAB05032.1"/>
    <property type="molecule type" value="Genomic_DNA"/>
</dbReference>
<dbReference type="PIR" id="T28098">
    <property type="entry name" value="T28098"/>
</dbReference>
<dbReference type="RefSeq" id="NP_493610.1">
    <property type="nucleotide sequence ID" value="NM_061209.6"/>
</dbReference>
<dbReference type="SMR" id="Q94126"/>
<dbReference type="BioGRID" id="38746">
    <property type="interactions" value="21"/>
</dbReference>
<dbReference type="DIP" id="DIP-27195N"/>
<dbReference type="FunCoup" id="Q94126">
    <property type="interactions" value="150"/>
</dbReference>
<dbReference type="IntAct" id="Q94126">
    <property type="interactions" value="20"/>
</dbReference>
<dbReference type="STRING" id="6239.ZK909.4.1"/>
<dbReference type="PaxDb" id="6239-ZK909.4"/>
<dbReference type="EnsemblMetazoa" id="ZK909.4.1">
    <property type="protein sequence ID" value="ZK909.4.1"/>
    <property type="gene ID" value="WBGene00000469"/>
</dbReference>
<dbReference type="GeneID" id="173365"/>
<dbReference type="KEGG" id="cel:CELE_ZK909.4"/>
<dbReference type="UCSC" id="ZK909.4">
    <property type="organism name" value="c. elegans"/>
</dbReference>
<dbReference type="AGR" id="WB:WBGene00000469"/>
<dbReference type="CTD" id="173365"/>
<dbReference type="WormBase" id="ZK909.4">
    <property type="protein sequence ID" value="CE15479"/>
    <property type="gene ID" value="WBGene00000469"/>
    <property type="gene designation" value="ces-2"/>
</dbReference>
<dbReference type="eggNOG" id="KOG3119">
    <property type="taxonomic scope" value="Eukaryota"/>
</dbReference>
<dbReference type="HOGENOM" id="CLU_1327470_0_0_1"/>
<dbReference type="InParanoid" id="Q94126"/>
<dbReference type="OMA" id="CENNHEE"/>
<dbReference type="OrthoDB" id="6022300at2759"/>
<dbReference type="SignaLink" id="Q94126"/>
<dbReference type="PRO" id="PR:Q94126"/>
<dbReference type="Proteomes" id="UP000001940">
    <property type="component" value="Chromosome I"/>
</dbReference>
<dbReference type="Bgee" id="WBGene00000469">
    <property type="expression patterns" value="Expressed in pharyngeal muscle cell (C elegans) and 3 other cell types or tissues"/>
</dbReference>
<dbReference type="GO" id="GO:0005634">
    <property type="term" value="C:nucleus"/>
    <property type="evidence" value="ECO:0000318"/>
    <property type="project" value="GO_Central"/>
</dbReference>
<dbReference type="GO" id="GO:0000981">
    <property type="term" value="F:DNA-binding transcription factor activity, RNA polymerase II-specific"/>
    <property type="evidence" value="ECO:0000318"/>
    <property type="project" value="GO_Central"/>
</dbReference>
<dbReference type="GO" id="GO:0042802">
    <property type="term" value="F:identical protein binding"/>
    <property type="evidence" value="ECO:0000353"/>
    <property type="project" value="IntAct"/>
</dbReference>
<dbReference type="GO" id="GO:0046982">
    <property type="term" value="F:protein heterodimerization activity"/>
    <property type="evidence" value="ECO:0000353"/>
    <property type="project" value="UniProtKB"/>
</dbReference>
<dbReference type="GO" id="GO:0000978">
    <property type="term" value="F:RNA polymerase II cis-regulatory region sequence-specific DNA binding"/>
    <property type="evidence" value="ECO:0000318"/>
    <property type="project" value="GO_Central"/>
</dbReference>
<dbReference type="GO" id="GO:0000977">
    <property type="term" value="F:RNA polymerase II transcription regulatory region sequence-specific DNA binding"/>
    <property type="evidence" value="ECO:0000314"/>
    <property type="project" value="UniProtKB"/>
</dbReference>
<dbReference type="GO" id="GO:1990837">
    <property type="term" value="F:sequence-specific double-stranded DNA binding"/>
    <property type="evidence" value="ECO:0000314"/>
    <property type="project" value="WormBase"/>
</dbReference>
<dbReference type="GO" id="GO:0009887">
    <property type="term" value="P:animal organ morphogenesis"/>
    <property type="evidence" value="ECO:0000315"/>
    <property type="project" value="UniProtKB"/>
</dbReference>
<dbReference type="GO" id="GO:0006915">
    <property type="term" value="P:apoptotic process"/>
    <property type="evidence" value="ECO:0000315"/>
    <property type="project" value="WormBase"/>
</dbReference>
<dbReference type="GO" id="GO:0043068">
    <property type="term" value="P:positive regulation of programmed cell death"/>
    <property type="evidence" value="ECO:0000315"/>
    <property type="project" value="WormBase"/>
</dbReference>
<dbReference type="GO" id="GO:0045944">
    <property type="term" value="P:positive regulation of transcription by RNA polymerase II"/>
    <property type="evidence" value="ECO:0000315"/>
    <property type="project" value="UniProtKB"/>
</dbReference>
<dbReference type="GO" id="GO:0006357">
    <property type="term" value="P:regulation of transcription by RNA polymerase II"/>
    <property type="evidence" value="ECO:0000318"/>
    <property type="project" value="GO_Central"/>
</dbReference>
<dbReference type="CDD" id="cd14695">
    <property type="entry name" value="bZIP_HLF"/>
    <property type="match status" value="1"/>
</dbReference>
<dbReference type="FunFam" id="1.20.5.170:FF:000109">
    <property type="entry name" value="ATF (cAMP-dependent transcription factor) family"/>
    <property type="match status" value="1"/>
</dbReference>
<dbReference type="Gene3D" id="1.20.5.170">
    <property type="match status" value="1"/>
</dbReference>
<dbReference type="InterPro" id="IPR004827">
    <property type="entry name" value="bZIP"/>
</dbReference>
<dbReference type="InterPro" id="IPR046347">
    <property type="entry name" value="bZIP_sf"/>
</dbReference>
<dbReference type="InterPro" id="IPR040223">
    <property type="entry name" value="PAR_bZIP"/>
</dbReference>
<dbReference type="PANTHER" id="PTHR11988">
    <property type="entry name" value="THYROTROPH EMBRYONIC FACTOR RELATED"/>
    <property type="match status" value="1"/>
</dbReference>
<dbReference type="PANTHER" id="PTHR11988:SF56">
    <property type="entry name" value="TRANSCRIPTION FACTOR CES-2"/>
    <property type="match status" value="1"/>
</dbReference>
<dbReference type="Pfam" id="PF07716">
    <property type="entry name" value="bZIP_2"/>
    <property type="match status" value="1"/>
</dbReference>
<dbReference type="SMART" id="SM00338">
    <property type="entry name" value="BRLZ"/>
    <property type="match status" value="1"/>
</dbReference>
<dbReference type="SUPFAM" id="SSF57959">
    <property type="entry name" value="Leucine zipper domain"/>
    <property type="match status" value="1"/>
</dbReference>
<dbReference type="PROSITE" id="PS50217">
    <property type="entry name" value="BZIP"/>
    <property type="match status" value="1"/>
</dbReference>
<gene>
    <name type="primary">ces-2</name>
    <name type="ORF">ZK909.4</name>
</gene>
<feature type="chain" id="PRO_0000076638" description="Transcription factor ces-2">
    <location>
        <begin position="1"/>
        <end position="211"/>
    </location>
</feature>
<feature type="domain" description="bZIP" evidence="1">
    <location>
        <begin position="116"/>
        <end position="179"/>
    </location>
</feature>
<feature type="region of interest" description="Disordered" evidence="2">
    <location>
        <begin position="83"/>
        <end position="152"/>
    </location>
</feature>
<feature type="region of interest" description="Basic motif" evidence="1">
    <location>
        <begin position="122"/>
        <end position="140"/>
    </location>
</feature>
<feature type="region of interest" description="Leucine-zipper" evidence="1">
    <location>
        <begin position="144"/>
        <end position="172"/>
    </location>
</feature>
<feature type="region of interest" description="Disordered" evidence="2">
    <location>
        <begin position="184"/>
        <end position="211"/>
    </location>
</feature>
<feature type="compositionally biased region" description="Low complexity" evidence="2">
    <location>
        <begin position="83"/>
        <end position="101"/>
    </location>
</feature>
<feature type="compositionally biased region" description="Basic and acidic residues" evidence="2">
    <location>
        <begin position="111"/>
        <end position="152"/>
    </location>
</feature>
<feature type="compositionally biased region" description="Low complexity" evidence="2">
    <location>
        <begin position="190"/>
        <end position="200"/>
    </location>
</feature>
<feature type="compositionally biased region" description="Basic and acidic residues" evidence="2">
    <location>
        <begin position="201"/>
        <end position="211"/>
    </location>
</feature>
<feature type="mutagenesis site" description="In n732; defects in programmed cell death in the sister cells of the serotoninergic neurosecretory motor (NSM) neurons. Morphological defects in excretory duct cells. Reduced expression of transcription factor lin-48." evidence="3 6">
    <original>A</original>
    <variation>T</variation>
    <location>
        <position position="129"/>
    </location>
</feature>
<accession>Q94126</accession>
<proteinExistence type="evidence at protein level"/>
<evidence type="ECO:0000255" key="1">
    <source>
        <dbReference type="PROSITE-ProRule" id="PRU00978"/>
    </source>
</evidence>
<evidence type="ECO:0000256" key="2">
    <source>
        <dbReference type="SAM" id="MobiDB-lite"/>
    </source>
</evidence>
<evidence type="ECO:0000269" key="3">
    <source>
    </source>
</evidence>
<evidence type="ECO:0000269" key="4">
    <source>
    </source>
</evidence>
<evidence type="ECO:0000269" key="5">
    <source>
    </source>
</evidence>
<evidence type="ECO:0000269" key="6">
    <source>
    </source>
</evidence>
<evidence type="ECO:0000305" key="7"/>
<evidence type="ECO:0000312" key="8">
    <source>
        <dbReference type="WormBase" id="ZK909.4"/>
    </source>
</evidence>
<comment type="function">
    <text evidence="4 5 6">Transcription factor (PubMed:16310763, PubMed:8700229). Required to activate programmed cell death in the sister cells of the serotoninergic neurosecretory motor (NSM) neurons (PubMed:8700229). Negatively regulates the activity of ces-1 which in turn negatively regulates the activities of cell-killing genes (PubMed:8700229). Binds to the DNA sequence 5'-RTTACGTAAY-3' (PubMed:8700229). Involved in the development of the excretory duct cell, by positively modulating embryonic transcription of putative transcription factor lin-48, acting in concert with NFIL3 transcription factor homolog atf-2 (PubMed:12231624, PubMed:16310763). Positively modulates expression of neuropeptide pigment dispersing factor homologs pdf-1 and pdf-2 (PubMed:19686386).</text>
</comment>
<comment type="subunit">
    <text evidence="4">Interacts with NFIL3 transcription factor homolog atf-2.</text>
</comment>
<comment type="interaction">
    <interactant intactId="EBI-328155">
        <id>Q94126</id>
    </interactant>
    <interactant intactId="EBI-317743">
        <id>Q21361</id>
        <label>atf-2</label>
    </interactant>
    <organismsDiffer>false</organismsDiffer>
    <experiments>4</experiments>
</comment>
<comment type="interaction">
    <interactant intactId="EBI-328155">
        <id>Q94126</id>
    </interactant>
    <interactant intactId="EBI-2914231">
        <id>Q8IG69</id>
        <label>cebp-2</label>
    </interactant>
    <organismsDiffer>false</organismsDiffer>
    <experiments>3</experiments>
</comment>
<comment type="interaction">
    <interactant intactId="EBI-328155">
        <id>Q94126</id>
    </interactant>
    <interactant intactId="EBI-328155">
        <id>Q94126</id>
        <label>ces-2</label>
    </interactant>
    <organismsDiffer>false</organismsDiffer>
    <experiments>2</experiments>
</comment>
<comment type="interaction">
    <interactant intactId="EBI-328155">
        <id>Q94126</id>
    </interactant>
    <interactant intactId="EBI-322774">
        <id>Q9XUK2</id>
        <label>zip-3</label>
    </interactant>
    <organismsDiffer>false</organismsDiffer>
    <experiments>2</experiments>
</comment>
<comment type="interaction">
    <interactant intactId="EBI-328155">
        <id>Q94126</id>
    </interactant>
    <interactant intactId="EBI-332523">
        <id>Q9NAE4</id>
        <label>zip-7</label>
    </interactant>
    <organismsDiffer>false</organismsDiffer>
    <experiments>4</experiments>
</comment>
<comment type="subcellular location">
    <subcellularLocation>
        <location>Nucleus</location>
    </subcellularLocation>
</comment>
<comment type="developmental stage">
    <text evidence="4">Expression begins in the embryo and diminishes in larvae (PubMed:16310763). Expressed in the excretory duct cell, as well as other cells, at larval L3 stage (PubMed:16310763).</text>
</comment>
<comment type="disruption phenotype">
    <text evidence="3">RNAi-mediated knockdown causes morphological defects in excretory duct cells. Reduces expression of transcription factor lin-48.</text>
</comment>
<comment type="similarity">
    <text evidence="7">Belongs to the bZIP family.</text>
</comment>